<proteinExistence type="inferred from homology"/>
<feature type="chain" id="PRO_0000137060" description="Nucleoside diphosphate kinase">
    <location>
        <begin position="1"/>
        <end position="150"/>
    </location>
</feature>
<feature type="active site" description="Pros-phosphohistidine intermediate" evidence="1">
    <location>
        <position position="115"/>
    </location>
</feature>
<feature type="binding site" evidence="1">
    <location>
        <position position="9"/>
    </location>
    <ligand>
        <name>ATP</name>
        <dbReference type="ChEBI" id="CHEBI:30616"/>
    </ligand>
</feature>
<feature type="binding site" evidence="1">
    <location>
        <position position="57"/>
    </location>
    <ligand>
        <name>ATP</name>
        <dbReference type="ChEBI" id="CHEBI:30616"/>
    </ligand>
</feature>
<feature type="binding site" evidence="1">
    <location>
        <position position="85"/>
    </location>
    <ligand>
        <name>ATP</name>
        <dbReference type="ChEBI" id="CHEBI:30616"/>
    </ligand>
</feature>
<feature type="binding site" evidence="1">
    <location>
        <position position="91"/>
    </location>
    <ligand>
        <name>ATP</name>
        <dbReference type="ChEBI" id="CHEBI:30616"/>
    </ligand>
</feature>
<feature type="binding site" evidence="1">
    <location>
        <position position="102"/>
    </location>
    <ligand>
        <name>ATP</name>
        <dbReference type="ChEBI" id="CHEBI:30616"/>
    </ligand>
</feature>
<feature type="binding site" evidence="1">
    <location>
        <position position="112"/>
    </location>
    <ligand>
        <name>ATP</name>
        <dbReference type="ChEBI" id="CHEBI:30616"/>
    </ligand>
</feature>
<dbReference type="EC" id="2.7.4.6" evidence="1"/>
<dbReference type="EMBL" id="AP006840">
    <property type="protein sequence ID" value="BAD40679.1"/>
    <property type="molecule type" value="Genomic_DNA"/>
</dbReference>
<dbReference type="RefSeq" id="WP_011195822.1">
    <property type="nucleotide sequence ID" value="NC_006177.1"/>
</dbReference>
<dbReference type="SMR" id="Q67NR4"/>
<dbReference type="STRING" id="292459.STH1694"/>
<dbReference type="KEGG" id="sth:STH1694"/>
<dbReference type="eggNOG" id="COG0105">
    <property type="taxonomic scope" value="Bacteria"/>
</dbReference>
<dbReference type="HOGENOM" id="CLU_060216_6_3_9"/>
<dbReference type="OrthoDB" id="9801161at2"/>
<dbReference type="Proteomes" id="UP000000417">
    <property type="component" value="Chromosome"/>
</dbReference>
<dbReference type="GO" id="GO:0005737">
    <property type="term" value="C:cytoplasm"/>
    <property type="evidence" value="ECO:0007669"/>
    <property type="project" value="UniProtKB-SubCell"/>
</dbReference>
<dbReference type="GO" id="GO:0005524">
    <property type="term" value="F:ATP binding"/>
    <property type="evidence" value="ECO:0007669"/>
    <property type="project" value="UniProtKB-UniRule"/>
</dbReference>
<dbReference type="GO" id="GO:0046872">
    <property type="term" value="F:metal ion binding"/>
    <property type="evidence" value="ECO:0007669"/>
    <property type="project" value="UniProtKB-KW"/>
</dbReference>
<dbReference type="GO" id="GO:0004550">
    <property type="term" value="F:nucleoside diphosphate kinase activity"/>
    <property type="evidence" value="ECO:0007669"/>
    <property type="project" value="UniProtKB-UniRule"/>
</dbReference>
<dbReference type="GO" id="GO:0006241">
    <property type="term" value="P:CTP biosynthetic process"/>
    <property type="evidence" value="ECO:0007669"/>
    <property type="project" value="UniProtKB-UniRule"/>
</dbReference>
<dbReference type="GO" id="GO:0006183">
    <property type="term" value="P:GTP biosynthetic process"/>
    <property type="evidence" value="ECO:0007669"/>
    <property type="project" value="UniProtKB-UniRule"/>
</dbReference>
<dbReference type="GO" id="GO:0006228">
    <property type="term" value="P:UTP biosynthetic process"/>
    <property type="evidence" value="ECO:0007669"/>
    <property type="project" value="UniProtKB-UniRule"/>
</dbReference>
<dbReference type="CDD" id="cd04413">
    <property type="entry name" value="NDPk_I"/>
    <property type="match status" value="1"/>
</dbReference>
<dbReference type="FunFam" id="3.30.70.141:FF:000002">
    <property type="entry name" value="Nucleoside diphosphate kinase"/>
    <property type="match status" value="1"/>
</dbReference>
<dbReference type="Gene3D" id="3.30.70.141">
    <property type="entry name" value="Nucleoside diphosphate kinase-like domain"/>
    <property type="match status" value="1"/>
</dbReference>
<dbReference type="HAMAP" id="MF_00451">
    <property type="entry name" value="NDP_kinase"/>
    <property type="match status" value="1"/>
</dbReference>
<dbReference type="InterPro" id="IPR034907">
    <property type="entry name" value="NDK-like_dom"/>
</dbReference>
<dbReference type="InterPro" id="IPR036850">
    <property type="entry name" value="NDK-like_dom_sf"/>
</dbReference>
<dbReference type="InterPro" id="IPR001564">
    <property type="entry name" value="Nucleoside_diP_kinase"/>
</dbReference>
<dbReference type="InterPro" id="IPR023005">
    <property type="entry name" value="Nucleoside_diP_kinase_AS"/>
</dbReference>
<dbReference type="NCBIfam" id="NF001908">
    <property type="entry name" value="PRK00668.1"/>
    <property type="match status" value="1"/>
</dbReference>
<dbReference type="PANTHER" id="PTHR11349">
    <property type="entry name" value="NUCLEOSIDE DIPHOSPHATE KINASE"/>
    <property type="match status" value="1"/>
</dbReference>
<dbReference type="Pfam" id="PF00334">
    <property type="entry name" value="NDK"/>
    <property type="match status" value="1"/>
</dbReference>
<dbReference type="PRINTS" id="PR01243">
    <property type="entry name" value="NUCDPKINASE"/>
</dbReference>
<dbReference type="SMART" id="SM00562">
    <property type="entry name" value="NDK"/>
    <property type="match status" value="1"/>
</dbReference>
<dbReference type="SUPFAM" id="SSF54919">
    <property type="entry name" value="Nucleoside diphosphate kinase, NDK"/>
    <property type="match status" value="1"/>
</dbReference>
<dbReference type="PROSITE" id="PS00469">
    <property type="entry name" value="NDPK"/>
    <property type="match status" value="1"/>
</dbReference>
<dbReference type="PROSITE" id="PS51374">
    <property type="entry name" value="NDPK_LIKE"/>
    <property type="match status" value="1"/>
</dbReference>
<protein>
    <recommendedName>
        <fullName evidence="1">Nucleoside diphosphate kinase</fullName>
        <shortName evidence="1">NDK</shortName>
        <shortName evidence="1">NDP kinase</shortName>
        <ecNumber evidence="1">2.7.4.6</ecNumber>
    </recommendedName>
    <alternativeName>
        <fullName evidence="1">Nucleoside-2-P kinase</fullName>
    </alternativeName>
</protein>
<name>NDK_SYMTH</name>
<accession>Q67NR4</accession>
<evidence type="ECO:0000255" key="1">
    <source>
        <dbReference type="HAMAP-Rule" id="MF_00451"/>
    </source>
</evidence>
<keyword id="KW-0067">ATP-binding</keyword>
<keyword id="KW-0963">Cytoplasm</keyword>
<keyword id="KW-0418">Kinase</keyword>
<keyword id="KW-0460">Magnesium</keyword>
<keyword id="KW-0479">Metal-binding</keyword>
<keyword id="KW-0546">Nucleotide metabolism</keyword>
<keyword id="KW-0547">Nucleotide-binding</keyword>
<keyword id="KW-0597">Phosphoprotein</keyword>
<keyword id="KW-1185">Reference proteome</keyword>
<keyword id="KW-0808">Transferase</keyword>
<comment type="function">
    <text evidence="1">Major role in the synthesis of nucleoside triphosphates other than ATP. The ATP gamma phosphate is transferred to the NDP beta phosphate via a ping-pong mechanism, using a phosphorylated active-site intermediate.</text>
</comment>
<comment type="catalytic activity">
    <reaction evidence="1">
        <text>a 2'-deoxyribonucleoside 5'-diphosphate + ATP = a 2'-deoxyribonucleoside 5'-triphosphate + ADP</text>
        <dbReference type="Rhea" id="RHEA:44640"/>
        <dbReference type="ChEBI" id="CHEBI:30616"/>
        <dbReference type="ChEBI" id="CHEBI:61560"/>
        <dbReference type="ChEBI" id="CHEBI:73316"/>
        <dbReference type="ChEBI" id="CHEBI:456216"/>
        <dbReference type="EC" id="2.7.4.6"/>
    </reaction>
</comment>
<comment type="catalytic activity">
    <reaction evidence="1">
        <text>a ribonucleoside 5'-diphosphate + ATP = a ribonucleoside 5'-triphosphate + ADP</text>
        <dbReference type="Rhea" id="RHEA:18113"/>
        <dbReference type="ChEBI" id="CHEBI:30616"/>
        <dbReference type="ChEBI" id="CHEBI:57930"/>
        <dbReference type="ChEBI" id="CHEBI:61557"/>
        <dbReference type="ChEBI" id="CHEBI:456216"/>
        <dbReference type="EC" id="2.7.4.6"/>
    </reaction>
</comment>
<comment type="cofactor">
    <cofactor evidence="1">
        <name>Mg(2+)</name>
        <dbReference type="ChEBI" id="CHEBI:18420"/>
    </cofactor>
</comment>
<comment type="subunit">
    <text evidence="1">Homotetramer.</text>
</comment>
<comment type="subcellular location">
    <subcellularLocation>
        <location evidence="1">Cytoplasm</location>
    </subcellularLocation>
</comment>
<comment type="similarity">
    <text evidence="1">Belongs to the NDK family.</text>
</comment>
<sequence length="150" mass="16797">MERSFVMVKPDGVQRGLIGEVISRLERRGLKLVAAKLMRVSRELAEEHYAQLKDKPFFPSLIEFITSGPVMAMVWEGPNAISIIRKTMGATNPANAEPGTIRADFACDVSYNVVHGSDGPESAEREIRLWFGEVEPSYSRSVDRWIFPEG</sequence>
<gene>
    <name evidence="1" type="primary">ndk</name>
    <name type="ordered locus">STH1694</name>
</gene>
<reference key="1">
    <citation type="journal article" date="2004" name="Nucleic Acids Res.">
        <title>Genome sequence of Symbiobacterium thermophilum, an uncultivable bacterium that depends on microbial commensalism.</title>
        <authorList>
            <person name="Ueda K."/>
            <person name="Yamashita A."/>
            <person name="Ishikawa J."/>
            <person name="Shimada M."/>
            <person name="Watsuji T."/>
            <person name="Morimura K."/>
            <person name="Ikeda H."/>
            <person name="Hattori M."/>
            <person name="Beppu T."/>
        </authorList>
    </citation>
    <scope>NUCLEOTIDE SEQUENCE [LARGE SCALE GENOMIC DNA]</scope>
    <source>
        <strain>DSM 24528 / JCM 14929 / IAM 14863 / T</strain>
    </source>
</reference>
<organism>
    <name type="scientific">Symbiobacterium thermophilum (strain DSM 24528 / JCM 14929 / IAM 14863 / T)</name>
    <dbReference type="NCBI Taxonomy" id="292459"/>
    <lineage>
        <taxon>Bacteria</taxon>
        <taxon>Bacillati</taxon>
        <taxon>Bacillota</taxon>
        <taxon>Clostridia</taxon>
        <taxon>Eubacteriales</taxon>
        <taxon>Symbiobacteriaceae</taxon>
        <taxon>Symbiobacterium</taxon>
    </lineage>
</organism>